<evidence type="ECO:0000255" key="1">
    <source>
        <dbReference type="HAMAP-Rule" id="MF_00382"/>
    </source>
</evidence>
<evidence type="ECO:0000305" key="2"/>
<protein>
    <recommendedName>
        <fullName evidence="1">Large ribosomal subunit protein bL20</fullName>
    </recommendedName>
    <alternativeName>
        <fullName evidence="2">50S ribosomal protein L20</fullName>
    </alternativeName>
</protein>
<accession>Q3B6M1</accession>
<organism>
    <name type="scientific">Chlorobium luteolum (strain DSM 273 / BCRC 81028 / 2530)</name>
    <name type="common">Pelodictyon luteolum</name>
    <dbReference type="NCBI Taxonomy" id="319225"/>
    <lineage>
        <taxon>Bacteria</taxon>
        <taxon>Pseudomonadati</taxon>
        <taxon>Chlorobiota</taxon>
        <taxon>Chlorobiia</taxon>
        <taxon>Chlorobiales</taxon>
        <taxon>Chlorobiaceae</taxon>
        <taxon>Chlorobium/Pelodictyon group</taxon>
        <taxon>Pelodictyon</taxon>
    </lineage>
</organism>
<sequence length="115" mass="13206">MPKANNAVASKARRKRVLKKAKGYWGSRGNILTVVKHAVDKGEQYAYRDRRAKKRSFRSLWIIRINAAARLNGTTYSRLMDAMIKKNVEIDRKTMAEIAVRDPEAFTQLVKTIID</sequence>
<dbReference type="EMBL" id="CP000096">
    <property type="protein sequence ID" value="ABB23010.1"/>
    <property type="molecule type" value="Genomic_DNA"/>
</dbReference>
<dbReference type="RefSeq" id="WP_011356886.1">
    <property type="nucleotide sequence ID" value="NC_007512.1"/>
</dbReference>
<dbReference type="SMR" id="Q3B6M1"/>
<dbReference type="STRING" id="319225.Plut_0120"/>
<dbReference type="KEGG" id="plt:Plut_0120"/>
<dbReference type="eggNOG" id="COG0292">
    <property type="taxonomic scope" value="Bacteria"/>
</dbReference>
<dbReference type="HOGENOM" id="CLU_123265_0_1_10"/>
<dbReference type="OrthoDB" id="9808966at2"/>
<dbReference type="Proteomes" id="UP000002709">
    <property type="component" value="Chromosome"/>
</dbReference>
<dbReference type="GO" id="GO:1990904">
    <property type="term" value="C:ribonucleoprotein complex"/>
    <property type="evidence" value="ECO:0007669"/>
    <property type="project" value="UniProtKB-KW"/>
</dbReference>
<dbReference type="GO" id="GO:0005840">
    <property type="term" value="C:ribosome"/>
    <property type="evidence" value="ECO:0007669"/>
    <property type="project" value="UniProtKB-KW"/>
</dbReference>
<dbReference type="GO" id="GO:0019843">
    <property type="term" value="F:rRNA binding"/>
    <property type="evidence" value="ECO:0007669"/>
    <property type="project" value="UniProtKB-UniRule"/>
</dbReference>
<dbReference type="GO" id="GO:0003735">
    <property type="term" value="F:structural constituent of ribosome"/>
    <property type="evidence" value="ECO:0007669"/>
    <property type="project" value="InterPro"/>
</dbReference>
<dbReference type="GO" id="GO:0000027">
    <property type="term" value="P:ribosomal large subunit assembly"/>
    <property type="evidence" value="ECO:0007669"/>
    <property type="project" value="UniProtKB-UniRule"/>
</dbReference>
<dbReference type="GO" id="GO:0006412">
    <property type="term" value="P:translation"/>
    <property type="evidence" value="ECO:0007669"/>
    <property type="project" value="InterPro"/>
</dbReference>
<dbReference type="CDD" id="cd07026">
    <property type="entry name" value="Ribosomal_L20"/>
    <property type="match status" value="1"/>
</dbReference>
<dbReference type="FunFam" id="1.10.1900.20:FF:000001">
    <property type="entry name" value="50S ribosomal protein L20"/>
    <property type="match status" value="1"/>
</dbReference>
<dbReference type="Gene3D" id="6.10.160.10">
    <property type="match status" value="1"/>
</dbReference>
<dbReference type="Gene3D" id="1.10.1900.20">
    <property type="entry name" value="Ribosomal protein L20"/>
    <property type="match status" value="1"/>
</dbReference>
<dbReference type="HAMAP" id="MF_00382">
    <property type="entry name" value="Ribosomal_bL20"/>
    <property type="match status" value="1"/>
</dbReference>
<dbReference type="InterPro" id="IPR005813">
    <property type="entry name" value="Ribosomal_bL20"/>
</dbReference>
<dbReference type="InterPro" id="IPR049946">
    <property type="entry name" value="RIBOSOMAL_L20_CS"/>
</dbReference>
<dbReference type="InterPro" id="IPR035566">
    <property type="entry name" value="Ribosomal_protein_bL20_C"/>
</dbReference>
<dbReference type="NCBIfam" id="TIGR01032">
    <property type="entry name" value="rplT_bact"/>
    <property type="match status" value="1"/>
</dbReference>
<dbReference type="PANTHER" id="PTHR10986">
    <property type="entry name" value="39S RIBOSOMAL PROTEIN L20"/>
    <property type="match status" value="1"/>
</dbReference>
<dbReference type="Pfam" id="PF00453">
    <property type="entry name" value="Ribosomal_L20"/>
    <property type="match status" value="1"/>
</dbReference>
<dbReference type="PRINTS" id="PR00062">
    <property type="entry name" value="RIBOSOMALL20"/>
</dbReference>
<dbReference type="SUPFAM" id="SSF74731">
    <property type="entry name" value="Ribosomal protein L20"/>
    <property type="match status" value="1"/>
</dbReference>
<dbReference type="PROSITE" id="PS00937">
    <property type="entry name" value="RIBOSOMAL_L20"/>
    <property type="match status" value="1"/>
</dbReference>
<reference key="1">
    <citation type="submission" date="2005-08" db="EMBL/GenBank/DDBJ databases">
        <title>Complete sequence of Pelodictyon luteolum DSM 273.</title>
        <authorList>
            <consortium name="US DOE Joint Genome Institute"/>
            <person name="Copeland A."/>
            <person name="Lucas S."/>
            <person name="Lapidus A."/>
            <person name="Barry K."/>
            <person name="Detter J.C."/>
            <person name="Glavina T."/>
            <person name="Hammon N."/>
            <person name="Israni S."/>
            <person name="Pitluck S."/>
            <person name="Bryant D."/>
            <person name="Schmutz J."/>
            <person name="Larimer F."/>
            <person name="Land M."/>
            <person name="Kyrpides N."/>
            <person name="Ivanova N."/>
            <person name="Richardson P."/>
        </authorList>
    </citation>
    <scope>NUCLEOTIDE SEQUENCE [LARGE SCALE GENOMIC DNA]</scope>
    <source>
        <strain>DSM 273 / BCRC 81028 / 2530</strain>
    </source>
</reference>
<proteinExistence type="inferred from homology"/>
<name>RL20_CHLL3</name>
<gene>
    <name evidence="1" type="primary">rplT</name>
    <name type="ordered locus">Plut_0120</name>
</gene>
<comment type="function">
    <text evidence="1">Binds directly to 23S ribosomal RNA and is necessary for the in vitro assembly process of the 50S ribosomal subunit. It is not involved in the protein synthesizing functions of that subunit.</text>
</comment>
<comment type="similarity">
    <text evidence="1">Belongs to the bacterial ribosomal protein bL20 family.</text>
</comment>
<feature type="chain" id="PRO_0000243712" description="Large ribosomal subunit protein bL20">
    <location>
        <begin position="1"/>
        <end position="115"/>
    </location>
</feature>
<keyword id="KW-1185">Reference proteome</keyword>
<keyword id="KW-0687">Ribonucleoprotein</keyword>
<keyword id="KW-0689">Ribosomal protein</keyword>
<keyword id="KW-0694">RNA-binding</keyword>
<keyword id="KW-0699">rRNA-binding</keyword>